<sequence>MKWIGLTGGIACGKSTVSRMLRTHDIPVVDADEIAKEVVKPGSAGLKSVIQEFGPEFLTADGALDRRKLGQKVFGHPELLHKLEAITHPLIREETRRRRRLYEDMGHKLAIYDIPLLFETRAKDQFDGVIVVACTKEQQKERLRRQNWSEDEIEMRIASQIPIQFKEQQADFVLHNNRDEQHLLREVDRVLKWLEELKNQN</sequence>
<reference key="1">
    <citation type="journal article" date="2004" name="Science">
        <title>A predator unmasked: life cycle of Bdellovibrio bacteriovorus from a genomic perspective.</title>
        <authorList>
            <person name="Rendulic S."/>
            <person name="Jagtap P."/>
            <person name="Rosinus A."/>
            <person name="Eppinger M."/>
            <person name="Baar C."/>
            <person name="Lanz C."/>
            <person name="Keller H."/>
            <person name="Lambert C."/>
            <person name="Evans K.J."/>
            <person name="Goesmann A."/>
            <person name="Meyer F."/>
            <person name="Sockett R.E."/>
            <person name="Schuster S.C."/>
        </authorList>
    </citation>
    <scope>NUCLEOTIDE SEQUENCE [LARGE SCALE GENOMIC DNA]</scope>
    <source>
        <strain>ATCC 15356 / DSM 50701 / NCIMB 9529 / HD100</strain>
    </source>
</reference>
<accession>Q6MIK8</accession>
<organism>
    <name type="scientific">Bdellovibrio bacteriovorus (strain ATCC 15356 / DSM 50701 / NCIMB 9529 / HD100)</name>
    <dbReference type="NCBI Taxonomy" id="264462"/>
    <lineage>
        <taxon>Bacteria</taxon>
        <taxon>Pseudomonadati</taxon>
        <taxon>Bdellovibrionota</taxon>
        <taxon>Bdellovibrionia</taxon>
        <taxon>Bdellovibrionales</taxon>
        <taxon>Pseudobdellovibrionaceae</taxon>
        <taxon>Bdellovibrio</taxon>
    </lineage>
</organism>
<name>COAE_BDEBA</name>
<evidence type="ECO:0000255" key="1">
    <source>
        <dbReference type="HAMAP-Rule" id="MF_00376"/>
    </source>
</evidence>
<proteinExistence type="inferred from homology"/>
<keyword id="KW-0067">ATP-binding</keyword>
<keyword id="KW-0173">Coenzyme A biosynthesis</keyword>
<keyword id="KW-0963">Cytoplasm</keyword>
<keyword id="KW-0418">Kinase</keyword>
<keyword id="KW-0547">Nucleotide-binding</keyword>
<keyword id="KW-1185">Reference proteome</keyword>
<keyword id="KW-0808">Transferase</keyword>
<protein>
    <recommendedName>
        <fullName evidence="1">Dephospho-CoA kinase</fullName>
        <ecNumber evidence="1">2.7.1.24</ecNumber>
    </recommendedName>
    <alternativeName>
        <fullName evidence="1">Dephosphocoenzyme A kinase</fullName>
    </alternativeName>
</protein>
<dbReference type="EC" id="2.7.1.24" evidence="1"/>
<dbReference type="EMBL" id="BX842654">
    <property type="protein sequence ID" value="CAE80905.1"/>
    <property type="molecule type" value="Genomic_DNA"/>
</dbReference>
<dbReference type="RefSeq" id="WP_011165509.1">
    <property type="nucleotide sequence ID" value="NC_005363.1"/>
</dbReference>
<dbReference type="SMR" id="Q6MIK8"/>
<dbReference type="STRING" id="264462.Bd3147"/>
<dbReference type="GeneID" id="93013993"/>
<dbReference type="KEGG" id="bba:Bd3147"/>
<dbReference type="eggNOG" id="COG0237">
    <property type="taxonomic scope" value="Bacteria"/>
</dbReference>
<dbReference type="HOGENOM" id="CLU_057180_0_0_7"/>
<dbReference type="UniPathway" id="UPA00241">
    <property type="reaction ID" value="UER00356"/>
</dbReference>
<dbReference type="Proteomes" id="UP000008080">
    <property type="component" value="Chromosome"/>
</dbReference>
<dbReference type="GO" id="GO:0005737">
    <property type="term" value="C:cytoplasm"/>
    <property type="evidence" value="ECO:0007669"/>
    <property type="project" value="UniProtKB-SubCell"/>
</dbReference>
<dbReference type="GO" id="GO:0005524">
    <property type="term" value="F:ATP binding"/>
    <property type="evidence" value="ECO:0007669"/>
    <property type="project" value="UniProtKB-UniRule"/>
</dbReference>
<dbReference type="GO" id="GO:0004140">
    <property type="term" value="F:dephospho-CoA kinase activity"/>
    <property type="evidence" value="ECO:0007669"/>
    <property type="project" value="UniProtKB-UniRule"/>
</dbReference>
<dbReference type="GO" id="GO:0015937">
    <property type="term" value="P:coenzyme A biosynthetic process"/>
    <property type="evidence" value="ECO:0007669"/>
    <property type="project" value="UniProtKB-UniRule"/>
</dbReference>
<dbReference type="CDD" id="cd02022">
    <property type="entry name" value="DPCK"/>
    <property type="match status" value="1"/>
</dbReference>
<dbReference type="FunFam" id="3.40.50.300:FF:000991">
    <property type="entry name" value="Dephospho-CoA kinase"/>
    <property type="match status" value="1"/>
</dbReference>
<dbReference type="Gene3D" id="3.40.50.300">
    <property type="entry name" value="P-loop containing nucleotide triphosphate hydrolases"/>
    <property type="match status" value="1"/>
</dbReference>
<dbReference type="HAMAP" id="MF_00376">
    <property type="entry name" value="Dephospho_CoA_kinase"/>
    <property type="match status" value="1"/>
</dbReference>
<dbReference type="InterPro" id="IPR001977">
    <property type="entry name" value="Depp_CoAkinase"/>
</dbReference>
<dbReference type="InterPro" id="IPR027417">
    <property type="entry name" value="P-loop_NTPase"/>
</dbReference>
<dbReference type="NCBIfam" id="TIGR00152">
    <property type="entry name" value="dephospho-CoA kinase"/>
    <property type="match status" value="1"/>
</dbReference>
<dbReference type="PANTHER" id="PTHR10695:SF46">
    <property type="entry name" value="BIFUNCTIONAL COENZYME A SYNTHASE-RELATED"/>
    <property type="match status" value="1"/>
</dbReference>
<dbReference type="PANTHER" id="PTHR10695">
    <property type="entry name" value="DEPHOSPHO-COA KINASE-RELATED"/>
    <property type="match status" value="1"/>
</dbReference>
<dbReference type="Pfam" id="PF01121">
    <property type="entry name" value="CoaE"/>
    <property type="match status" value="1"/>
</dbReference>
<dbReference type="SUPFAM" id="SSF52540">
    <property type="entry name" value="P-loop containing nucleoside triphosphate hydrolases"/>
    <property type="match status" value="1"/>
</dbReference>
<dbReference type="PROSITE" id="PS51219">
    <property type="entry name" value="DPCK"/>
    <property type="match status" value="1"/>
</dbReference>
<feature type="chain" id="PRO_0000172910" description="Dephospho-CoA kinase">
    <location>
        <begin position="1"/>
        <end position="201"/>
    </location>
</feature>
<feature type="domain" description="DPCK" evidence="1">
    <location>
        <begin position="3"/>
        <end position="201"/>
    </location>
</feature>
<feature type="binding site" evidence="1">
    <location>
        <begin position="11"/>
        <end position="16"/>
    </location>
    <ligand>
        <name>ATP</name>
        <dbReference type="ChEBI" id="CHEBI:30616"/>
    </ligand>
</feature>
<gene>
    <name evidence="1" type="primary">coaE</name>
    <name type="ordered locus">Bd3147</name>
</gene>
<comment type="function">
    <text evidence="1">Catalyzes the phosphorylation of the 3'-hydroxyl group of dephosphocoenzyme A to form coenzyme A.</text>
</comment>
<comment type="catalytic activity">
    <reaction evidence="1">
        <text>3'-dephospho-CoA + ATP = ADP + CoA + H(+)</text>
        <dbReference type="Rhea" id="RHEA:18245"/>
        <dbReference type="ChEBI" id="CHEBI:15378"/>
        <dbReference type="ChEBI" id="CHEBI:30616"/>
        <dbReference type="ChEBI" id="CHEBI:57287"/>
        <dbReference type="ChEBI" id="CHEBI:57328"/>
        <dbReference type="ChEBI" id="CHEBI:456216"/>
        <dbReference type="EC" id="2.7.1.24"/>
    </reaction>
</comment>
<comment type="pathway">
    <text evidence="1">Cofactor biosynthesis; coenzyme A biosynthesis; CoA from (R)-pantothenate: step 5/5.</text>
</comment>
<comment type="subcellular location">
    <subcellularLocation>
        <location evidence="1">Cytoplasm</location>
    </subcellularLocation>
</comment>
<comment type="similarity">
    <text evidence="1">Belongs to the CoaE family.</text>
</comment>